<evidence type="ECO:0000255" key="1">
    <source>
        <dbReference type="HAMAP-Rule" id="MF_00019"/>
    </source>
</evidence>
<organism>
    <name type="scientific">Nitrobacter hamburgensis (strain DSM 10229 / NCIMB 13809 / X14)</name>
    <dbReference type="NCBI Taxonomy" id="323097"/>
    <lineage>
        <taxon>Bacteria</taxon>
        <taxon>Pseudomonadati</taxon>
        <taxon>Pseudomonadota</taxon>
        <taxon>Alphaproteobacteria</taxon>
        <taxon>Hyphomicrobiales</taxon>
        <taxon>Nitrobacteraceae</taxon>
        <taxon>Nitrobacter</taxon>
    </lineage>
</organism>
<comment type="function">
    <text evidence="1">Catalyzes the reversible formation of acyl-phosphate (acyl-PO(4)) from acyl-[acyl-carrier-protein] (acyl-ACP). This enzyme utilizes acyl-ACP as fatty acyl donor, but not acyl-CoA.</text>
</comment>
<comment type="catalytic activity">
    <reaction evidence="1">
        <text>a fatty acyl-[ACP] + phosphate = an acyl phosphate + holo-[ACP]</text>
        <dbReference type="Rhea" id="RHEA:42292"/>
        <dbReference type="Rhea" id="RHEA-COMP:9685"/>
        <dbReference type="Rhea" id="RHEA-COMP:14125"/>
        <dbReference type="ChEBI" id="CHEBI:43474"/>
        <dbReference type="ChEBI" id="CHEBI:59918"/>
        <dbReference type="ChEBI" id="CHEBI:64479"/>
        <dbReference type="ChEBI" id="CHEBI:138651"/>
        <dbReference type="EC" id="2.3.1.274"/>
    </reaction>
</comment>
<comment type="pathway">
    <text evidence="1">Lipid metabolism; phospholipid metabolism.</text>
</comment>
<comment type="subunit">
    <text evidence="1">Homodimer. Probably interacts with PlsY.</text>
</comment>
<comment type="subcellular location">
    <subcellularLocation>
        <location evidence="1">Cytoplasm</location>
    </subcellularLocation>
    <text evidence="1">Associated with the membrane possibly through PlsY.</text>
</comment>
<comment type="similarity">
    <text evidence="1">Belongs to the PlsX family.</text>
</comment>
<protein>
    <recommendedName>
        <fullName evidence="1">Phosphate acyltransferase</fullName>
        <ecNumber evidence="1">2.3.1.274</ecNumber>
    </recommendedName>
    <alternativeName>
        <fullName evidence="1">Acyl-ACP phosphotransacylase</fullName>
    </alternativeName>
    <alternativeName>
        <fullName evidence="1">Acyl-[acyl-carrier-protein]--phosphate acyltransferase</fullName>
    </alternativeName>
    <alternativeName>
        <fullName evidence="1">Phosphate-acyl-ACP acyltransferase</fullName>
    </alternativeName>
</protein>
<name>PLSX_NITHX</name>
<gene>
    <name evidence="1" type="primary">plsX</name>
    <name type="ordered locus">Nham_1585</name>
</gene>
<reference key="1">
    <citation type="submission" date="2006-03" db="EMBL/GenBank/DDBJ databases">
        <title>Complete sequence of chromosome of Nitrobacter hamburgensis X14.</title>
        <authorList>
            <consortium name="US DOE Joint Genome Institute"/>
            <person name="Copeland A."/>
            <person name="Lucas S."/>
            <person name="Lapidus A."/>
            <person name="Barry K."/>
            <person name="Detter J.C."/>
            <person name="Glavina del Rio T."/>
            <person name="Hammon N."/>
            <person name="Israni S."/>
            <person name="Dalin E."/>
            <person name="Tice H."/>
            <person name="Pitluck S."/>
            <person name="Chain P."/>
            <person name="Malfatti S."/>
            <person name="Shin M."/>
            <person name="Vergez L."/>
            <person name="Schmutz J."/>
            <person name="Larimer F."/>
            <person name="Land M."/>
            <person name="Hauser L."/>
            <person name="Kyrpides N."/>
            <person name="Ivanova N."/>
            <person name="Ward B."/>
            <person name="Arp D."/>
            <person name="Klotz M."/>
            <person name="Stein L."/>
            <person name="O'Mullan G."/>
            <person name="Starkenburg S."/>
            <person name="Sayavedra L."/>
            <person name="Poret-Peterson A.T."/>
            <person name="Gentry M.E."/>
            <person name="Bruce D."/>
            <person name="Richardson P."/>
        </authorList>
    </citation>
    <scope>NUCLEOTIDE SEQUENCE [LARGE SCALE GENOMIC DNA]</scope>
    <source>
        <strain>DSM 10229 / NCIMB 13809 / X14</strain>
    </source>
</reference>
<accession>Q1QMZ1</accession>
<sequence length="354" mass="37470">MPQKVRIALDAMGGDIGASVVIPGAVISLNRHPDTEFLLYGDRTLIEAQLAAHPAMKAVSRVVHTDVAVAMHDKPSQALRRGRKTSSMWLAIDAVKKGEADVAVSAGNTGALMAMARFNLRTLPGIDRPAIAGVWPTMRGDSVVLDLGATIGGDAHHLMALAIMGSAMARVLFGLERPTVGLLNIGVEEIKGGEEIREAAELLRAMDLPQLEFIGFVEGDGIGKGAADVIVSEGFSGNIALKAAEGTARQFAQYLRGAMSRTLLSRIGYLFARGAFKALRDKMDPRKSNGGVFLGLNGIVVKSHGGTDAEGFAYAVDVGYEMVRYDLLTKINQTLNRHGHTTLASASAVQEALS</sequence>
<dbReference type="EC" id="2.3.1.274" evidence="1"/>
<dbReference type="EMBL" id="CP000319">
    <property type="protein sequence ID" value="ABE62406.1"/>
    <property type="molecule type" value="Genomic_DNA"/>
</dbReference>
<dbReference type="RefSeq" id="WP_011510092.1">
    <property type="nucleotide sequence ID" value="NC_007964.1"/>
</dbReference>
<dbReference type="SMR" id="Q1QMZ1"/>
<dbReference type="STRING" id="323097.Nham_1585"/>
<dbReference type="KEGG" id="nha:Nham_1585"/>
<dbReference type="eggNOG" id="COG0416">
    <property type="taxonomic scope" value="Bacteria"/>
</dbReference>
<dbReference type="HOGENOM" id="CLU_039379_1_0_5"/>
<dbReference type="OrthoDB" id="9806408at2"/>
<dbReference type="UniPathway" id="UPA00085"/>
<dbReference type="Proteomes" id="UP000001953">
    <property type="component" value="Chromosome"/>
</dbReference>
<dbReference type="GO" id="GO:0005737">
    <property type="term" value="C:cytoplasm"/>
    <property type="evidence" value="ECO:0007669"/>
    <property type="project" value="UniProtKB-SubCell"/>
</dbReference>
<dbReference type="GO" id="GO:0043811">
    <property type="term" value="F:phosphate:acyl-[acyl carrier protein] acyltransferase activity"/>
    <property type="evidence" value="ECO:0007669"/>
    <property type="project" value="UniProtKB-UniRule"/>
</dbReference>
<dbReference type="GO" id="GO:0006633">
    <property type="term" value="P:fatty acid biosynthetic process"/>
    <property type="evidence" value="ECO:0007669"/>
    <property type="project" value="UniProtKB-UniRule"/>
</dbReference>
<dbReference type="GO" id="GO:0008654">
    <property type="term" value="P:phospholipid biosynthetic process"/>
    <property type="evidence" value="ECO:0007669"/>
    <property type="project" value="UniProtKB-KW"/>
</dbReference>
<dbReference type="Gene3D" id="3.40.718.10">
    <property type="entry name" value="Isopropylmalate Dehydrogenase"/>
    <property type="match status" value="1"/>
</dbReference>
<dbReference type="HAMAP" id="MF_00019">
    <property type="entry name" value="PlsX"/>
    <property type="match status" value="1"/>
</dbReference>
<dbReference type="InterPro" id="IPR003664">
    <property type="entry name" value="FA_synthesis"/>
</dbReference>
<dbReference type="InterPro" id="IPR012281">
    <property type="entry name" value="Phospholipid_synth_PlsX-like"/>
</dbReference>
<dbReference type="NCBIfam" id="TIGR00182">
    <property type="entry name" value="plsX"/>
    <property type="match status" value="1"/>
</dbReference>
<dbReference type="PANTHER" id="PTHR30100">
    <property type="entry name" value="FATTY ACID/PHOSPHOLIPID SYNTHESIS PROTEIN PLSX"/>
    <property type="match status" value="1"/>
</dbReference>
<dbReference type="PANTHER" id="PTHR30100:SF1">
    <property type="entry name" value="PHOSPHATE ACYLTRANSFERASE"/>
    <property type="match status" value="1"/>
</dbReference>
<dbReference type="Pfam" id="PF02504">
    <property type="entry name" value="FA_synthesis"/>
    <property type="match status" value="1"/>
</dbReference>
<dbReference type="PIRSF" id="PIRSF002465">
    <property type="entry name" value="Phsphlp_syn_PlsX"/>
    <property type="match status" value="1"/>
</dbReference>
<dbReference type="SUPFAM" id="SSF53659">
    <property type="entry name" value="Isocitrate/Isopropylmalate dehydrogenase-like"/>
    <property type="match status" value="1"/>
</dbReference>
<keyword id="KW-0963">Cytoplasm</keyword>
<keyword id="KW-0444">Lipid biosynthesis</keyword>
<keyword id="KW-0443">Lipid metabolism</keyword>
<keyword id="KW-0594">Phospholipid biosynthesis</keyword>
<keyword id="KW-1208">Phospholipid metabolism</keyword>
<keyword id="KW-1185">Reference proteome</keyword>
<keyword id="KW-0808">Transferase</keyword>
<feature type="chain" id="PRO_1000001792" description="Phosphate acyltransferase">
    <location>
        <begin position="1"/>
        <end position="354"/>
    </location>
</feature>
<proteinExistence type="inferred from homology"/>